<feature type="chain" id="PRO_1000188472" description="UPF0597 protein Sbal223_1296">
    <location>
        <begin position="1"/>
        <end position="424"/>
    </location>
</feature>
<organism>
    <name type="scientific">Shewanella baltica (strain OS223)</name>
    <dbReference type="NCBI Taxonomy" id="407976"/>
    <lineage>
        <taxon>Bacteria</taxon>
        <taxon>Pseudomonadati</taxon>
        <taxon>Pseudomonadota</taxon>
        <taxon>Gammaproteobacteria</taxon>
        <taxon>Alteromonadales</taxon>
        <taxon>Shewanellaceae</taxon>
        <taxon>Shewanella</taxon>
    </lineage>
</organism>
<reference key="1">
    <citation type="submission" date="2008-12" db="EMBL/GenBank/DDBJ databases">
        <title>Complete sequence of chromosome of Shewanella baltica OS223.</title>
        <authorList>
            <consortium name="US DOE Joint Genome Institute"/>
            <person name="Lucas S."/>
            <person name="Copeland A."/>
            <person name="Lapidus A."/>
            <person name="Glavina del Rio T."/>
            <person name="Dalin E."/>
            <person name="Tice H."/>
            <person name="Bruce D."/>
            <person name="Goodwin L."/>
            <person name="Pitluck S."/>
            <person name="Chertkov O."/>
            <person name="Meincke L."/>
            <person name="Brettin T."/>
            <person name="Detter J.C."/>
            <person name="Han C."/>
            <person name="Kuske C.R."/>
            <person name="Larimer F."/>
            <person name="Land M."/>
            <person name="Hauser L."/>
            <person name="Kyrpides N."/>
            <person name="Ovchinnikova G."/>
            <person name="Brettar I."/>
            <person name="Rodrigues J."/>
            <person name="Konstantinidis K."/>
            <person name="Tiedje J."/>
        </authorList>
    </citation>
    <scope>NUCLEOTIDE SEQUENCE [LARGE SCALE GENOMIC DNA]</scope>
    <source>
        <strain>OS223</strain>
    </source>
</reference>
<dbReference type="EMBL" id="CP001252">
    <property type="protein sequence ID" value="ACK45805.1"/>
    <property type="molecule type" value="Genomic_DNA"/>
</dbReference>
<dbReference type="RefSeq" id="WP_012587139.1">
    <property type="nucleotide sequence ID" value="NC_011663.1"/>
</dbReference>
<dbReference type="SMR" id="B8E8Y9"/>
<dbReference type="KEGG" id="sbp:Sbal223_1296"/>
<dbReference type="HOGENOM" id="CLU_051840_0_0_6"/>
<dbReference type="Proteomes" id="UP000002507">
    <property type="component" value="Chromosome"/>
</dbReference>
<dbReference type="GO" id="GO:0080146">
    <property type="term" value="F:L-cysteine desulfhydrase activity"/>
    <property type="evidence" value="ECO:0007669"/>
    <property type="project" value="TreeGrafter"/>
</dbReference>
<dbReference type="GO" id="GO:0019450">
    <property type="term" value="P:L-cysteine catabolic process to pyruvate"/>
    <property type="evidence" value="ECO:0007669"/>
    <property type="project" value="TreeGrafter"/>
</dbReference>
<dbReference type="HAMAP" id="MF_01845">
    <property type="entry name" value="UPF0597"/>
    <property type="match status" value="1"/>
</dbReference>
<dbReference type="InterPro" id="IPR005130">
    <property type="entry name" value="Ser_deHydtase-like_asu"/>
</dbReference>
<dbReference type="InterPro" id="IPR021144">
    <property type="entry name" value="UPF0597"/>
</dbReference>
<dbReference type="PANTHER" id="PTHR30501">
    <property type="entry name" value="UPF0597 PROTEIN YHAM"/>
    <property type="match status" value="1"/>
</dbReference>
<dbReference type="PANTHER" id="PTHR30501:SF2">
    <property type="entry name" value="UPF0597 PROTEIN YHAM"/>
    <property type="match status" value="1"/>
</dbReference>
<dbReference type="Pfam" id="PF03313">
    <property type="entry name" value="SDH_alpha"/>
    <property type="match status" value="1"/>
</dbReference>
<dbReference type="PIRSF" id="PIRSF006054">
    <property type="entry name" value="UCP006054"/>
    <property type="match status" value="1"/>
</dbReference>
<evidence type="ECO:0000255" key="1">
    <source>
        <dbReference type="HAMAP-Rule" id="MF_01845"/>
    </source>
</evidence>
<name>Y1296_SHEB2</name>
<comment type="similarity">
    <text evidence="1">Belongs to the UPF0597 family.</text>
</comment>
<protein>
    <recommendedName>
        <fullName evidence="1">UPF0597 protein Sbal223_1296</fullName>
    </recommendedName>
</protein>
<proteinExistence type="inferred from homology"/>
<sequence>MKPQWQQYINIIKQVVKPALGCTEPIAAAYAAAVARALLGVEPDSIAVQVSDNLYKNSMGVFVPGTGKIGLAIAAAAGAIAGNPDAGLEVLAVITPEQVARAQALIDAGKVTVERTETAEFIYCCVIAKKGDREALVKICGGHTLIAEKRLNGESVFSVDSTQAKATGSICEGVDITIESIYRFAQEVPFEEIKFILEASELNGKLSDEGMANPYGLEVGRTMKSGIAAGIIGEDLLNKIVMLTAAASDARMGGANLPAMSNLGSGNQGIAATIPVVLTAQCYKVSEEQLARALIMSHLGAIYIKSHYPPLSAFCGNTVTSAAASMAMVYLAGGSFEQSCFAIQNVISDSSGMVCDGAKASCAMKVSTSSSAAVRSFLMALSSHNVSGQGIIATDVEKTIKNIGKMILNGMSSTDVTIIDIMSA</sequence>
<accession>B8E8Y9</accession>
<gene>
    <name type="ordered locus">Sbal223_1296</name>
</gene>